<accession>B5EJD2</accession>
<reference key="1">
    <citation type="submission" date="2008-08" db="EMBL/GenBank/DDBJ databases">
        <title>Complete sequence of Acidithiobacillus ferrooxidans ATCC 53993.</title>
        <authorList>
            <person name="Lucas S."/>
            <person name="Copeland A."/>
            <person name="Lapidus A."/>
            <person name="Glavina del Rio T."/>
            <person name="Dalin E."/>
            <person name="Tice H."/>
            <person name="Bruce D."/>
            <person name="Goodwin L."/>
            <person name="Pitluck S."/>
            <person name="Sims D."/>
            <person name="Brettin T."/>
            <person name="Detter J.C."/>
            <person name="Han C."/>
            <person name="Kuske C.R."/>
            <person name="Larimer F."/>
            <person name="Land M."/>
            <person name="Hauser L."/>
            <person name="Kyrpides N."/>
            <person name="Lykidis A."/>
            <person name="Borole A.P."/>
        </authorList>
    </citation>
    <scope>NUCLEOTIDE SEQUENCE [LARGE SCALE GENOMIC DNA]</scope>
    <source>
        <strain>ATCC 53993 / BNL-5-31</strain>
    </source>
</reference>
<sequence>MDNVADRVKKVVVEQLGVNEDEVTNEASFVDDLGADSLDTVELVMALEEEFDCEIPDEEAEKIATVQQAIDYVSAHIPAKDA</sequence>
<protein>
    <recommendedName>
        <fullName evidence="1">Acyl carrier protein</fullName>
        <shortName evidence="1">ACP</shortName>
    </recommendedName>
</protein>
<gene>
    <name evidence="1" type="primary">acpP</name>
    <name type="ordered locus">Lferr_1584</name>
</gene>
<dbReference type="EMBL" id="CP001132">
    <property type="protein sequence ID" value="ACH83806.1"/>
    <property type="molecule type" value="Genomic_DNA"/>
</dbReference>
<dbReference type="RefSeq" id="WP_009561355.1">
    <property type="nucleotide sequence ID" value="NC_011206.1"/>
</dbReference>
<dbReference type="SMR" id="B5EJD2"/>
<dbReference type="GeneID" id="65281064"/>
<dbReference type="KEGG" id="afe:Lferr_1584"/>
<dbReference type="eggNOG" id="COG0236">
    <property type="taxonomic scope" value="Bacteria"/>
</dbReference>
<dbReference type="HOGENOM" id="CLU_108696_5_1_6"/>
<dbReference type="UniPathway" id="UPA00094"/>
<dbReference type="GO" id="GO:0005829">
    <property type="term" value="C:cytosol"/>
    <property type="evidence" value="ECO:0007669"/>
    <property type="project" value="TreeGrafter"/>
</dbReference>
<dbReference type="GO" id="GO:0016020">
    <property type="term" value="C:membrane"/>
    <property type="evidence" value="ECO:0007669"/>
    <property type="project" value="GOC"/>
</dbReference>
<dbReference type="GO" id="GO:0000035">
    <property type="term" value="F:acyl binding"/>
    <property type="evidence" value="ECO:0007669"/>
    <property type="project" value="TreeGrafter"/>
</dbReference>
<dbReference type="GO" id="GO:0000036">
    <property type="term" value="F:acyl carrier activity"/>
    <property type="evidence" value="ECO:0007669"/>
    <property type="project" value="UniProtKB-UniRule"/>
</dbReference>
<dbReference type="GO" id="GO:0031177">
    <property type="term" value="F:phosphopantetheine binding"/>
    <property type="evidence" value="ECO:0007669"/>
    <property type="project" value="InterPro"/>
</dbReference>
<dbReference type="GO" id="GO:0009245">
    <property type="term" value="P:lipid A biosynthetic process"/>
    <property type="evidence" value="ECO:0007669"/>
    <property type="project" value="TreeGrafter"/>
</dbReference>
<dbReference type="FunFam" id="1.10.1200.10:FF:000001">
    <property type="entry name" value="Acyl carrier protein"/>
    <property type="match status" value="1"/>
</dbReference>
<dbReference type="Gene3D" id="1.10.1200.10">
    <property type="entry name" value="ACP-like"/>
    <property type="match status" value="1"/>
</dbReference>
<dbReference type="HAMAP" id="MF_01217">
    <property type="entry name" value="Acyl_carrier"/>
    <property type="match status" value="1"/>
</dbReference>
<dbReference type="InterPro" id="IPR003231">
    <property type="entry name" value="ACP"/>
</dbReference>
<dbReference type="InterPro" id="IPR036736">
    <property type="entry name" value="ACP-like_sf"/>
</dbReference>
<dbReference type="InterPro" id="IPR020806">
    <property type="entry name" value="PKS_PP-bd"/>
</dbReference>
<dbReference type="InterPro" id="IPR009081">
    <property type="entry name" value="PP-bd_ACP"/>
</dbReference>
<dbReference type="InterPro" id="IPR006162">
    <property type="entry name" value="Ppantetheine_attach_site"/>
</dbReference>
<dbReference type="NCBIfam" id="TIGR00517">
    <property type="entry name" value="acyl_carrier"/>
    <property type="match status" value="1"/>
</dbReference>
<dbReference type="NCBIfam" id="NF002148">
    <property type="entry name" value="PRK00982.1-2"/>
    <property type="match status" value="1"/>
</dbReference>
<dbReference type="NCBIfam" id="NF002149">
    <property type="entry name" value="PRK00982.1-3"/>
    <property type="match status" value="1"/>
</dbReference>
<dbReference type="NCBIfam" id="NF002150">
    <property type="entry name" value="PRK00982.1-4"/>
    <property type="match status" value="1"/>
</dbReference>
<dbReference type="NCBIfam" id="NF002151">
    <property type="entry name" value="PRK00982.1-5"/>
    <property type="match status" value="1"/>
</dbReference>
<dbReference type="PANTHER" id="PTHR20863">
    <property type="entry name" value="ACYL CARRIER PROTEIN"/>
    <property type="match status" value="1"/>
</dbReference>
<dbReference type="PANTHER" id="PTHR20863:SF76">
    <property type="entry name" value="CARRIER DOMAIN-CONTAINING PROTEIN"/>
    <property type="match status" value="1"/>
</dbReference>
<dbReference type="Pfam" id="PF00550">
    <property type="entry name" value="PP-binding"/>
    <property type="match status" value="1"/>
</dbReference>
<dbReference type="SMART" id="SM00823">
    <property type="entry name" value="PKS_PP"/>
    <property type="match status" value="1"/>
</dbReference>
<dbReference type="SUPFAM" id="SSF47336">
    <property type="entry name" value="ACP-like"/>
    <property type="match status" value="1"/>
</dbReference>
<dbReference type="PROSITE" id="PS50075">
    <property type="entry name" value="CARRIER"/>
    <property type="match status" value="1"/>
</dbReference>
<dbReference type="PROSITE" id="PS00012">
    <property type="entry name" value="PHOSPHOPANTETHEINE"/>
    <property type="match status" value="1"/>
</dbReference>
<organism>
    <name type="scientific">Acidithiobacillus ferrooxidans (strain ATCC 53993 / BNL-5-31)</name>
    <name type="common">Leptospirillum ferrooxidans (ATCC 53993)</name>
    <dbReference type="NCBI Taxonomy" id="380394"/>
    <lineage>
        <taxon>Bacteria</taxon>
        <taxon>Pseudomonadati</taxon>
        <taxon>Pseudomonadota</taxon>
        <taxon>Acidithiobacillia</taxon>
        <taxon>Acidithiobacillales</taxon>
        <taxon>Acidithiobacillaceae</taxon>
        <taxon>Acidithiobacillus</taxon>
    </lineage>
</organism>
<keyword id="KW-0963">Cytoplasm</keyword>
<keyword id="KW-0275">Fatty acid biosynthesis</keyword>
<keyword id="KW-0276">Fatty acid metabolism</keyword>
<keyword id="KW-0444">Lipid biosynthesis</keyword>
<keyword id="KW-0443">Lipid metabolism</keyword>
<keyword id="KW-0596">Phosphopantetheine</keyword>
<keyword id="KW-0597">Phosphoprotein</keyword>
<comment type="function">
    <text evidence="1">Carrier of the growing fatty acid chain in fatty acid biosynthesis.</text>
</comment>
<comment type="pathway">
    <text evidence="1">Lipid metabolism; fatty acid biosynthesis.</text>
</comment>
<comment type="subcellular location">
    <subcellularLocation>
        <location evidence="1">Cytoplasm</location>
    </subcellularLocation>
</comment>
<comment type="PTM">
    <text evidence="1">4'-phosphopantetheine is transferred from CoA to a specific serine of apo-ACP by AcpS. This modification is essential for activity because fatty acids are bound in thioester linkage to the sulfhydryl of the prosthetic group.</text>
</comment>
<comment type="similarity">
    <text evidence="1">Belongs to the acyl carrier protein (ACP) family.</text>
</comment>
<proteinExistence type="inferred from homology"/>
<name>ACP_ACIF5</name>
<feature type="chain" id="PRO_1000138993" description="Acyl carrier protein">
    <location>
        <begin position="1"/>
        <end position="82"/>
    </location>
</feature>
<feature type="domain" description="Carrier" evidence="2">
    <location>
        <begin position="2"/>
        <end position="77"/>
    </location>
</feature>
<feature type="modified residue" description="O-(pantetheine 4'-phosphoryl)serine" evidence="2">
    <location>
        <position position="37"/>
    </location>
</feature>
<evidence type="ECO:0000255" key="1">
    <source>
        <dbReference type="HAMAP-Rule" id="MF_01217"/>
    </source>
</evidence>
<evidence type="ECO:0000255" key="2">
    <source>
        <dbReference type="PROSITE-ProRule" id="PRU00258"/>
    </source>
</evidence>